<proteinExistence type="inferred from homology"/>
<gene>
    <name type="primary">lysU</name>
    <name type="ordered locus">c5138</name>
</gene>
<keyword id="KW-0007">Acetylation</keyword>
<keyword id="KW-0030">Aminoacyl-tRNA synthetase</keyword>
<keyword id="KW-0067">ATP-binding</keyword>
<keyword id="KW-0963">Cytoplasm</keyword>
<keyword id="KW-0436">Ligase</keyword>
<keyword id="KW-0460">Magnesium</keyword>
<keyword id="KW-0479">Metal-binding</keyword>
<keyword id="KW-0547">Nucleotide-binding</keyword>
<keyword id="KW-0648">Protein biosynthesis</keyword>
<keyword id="KW-1185">Reference proteome</keyword>
<reference key="1">
    <citation type="journal article" date="2002" name="Proc. Natl. Acad. Sci. U.S.A.">
        <title>Extensive mosaic structure revealed by the complete genome sequence of uropathogenic Escherichia coli.</title>
        <authorList>
            <person name="Welch R.A."/>
            <person name="Burland V."/>
            <person name="Plunkett G. III"/>
            <person name="Redford P."/>
            <person name="Roesch P."/>
            <person name="Rasko D."/>
            <person name="Buckles E.L."/>
            <person name="Liou S.-R."/>
            <person name="Boutin A."/>
            <person name="Hackett J."/>
            <person name="Stroud D."/>
            <person name="Mayhew G.F."/>
            <person name="Rose D.J."/>
            <person name="Zhou S."/>
            <person name="Schwartz D.C."/>
            <person name="Perna N.T."/>
            <person name="Mobley H.L.T."/>
            <person name="Donnenberg M.S."/>
            <person name="Blattner F.R."/>
        </authorList>
    </citation>
    <scope>NUCLEOTIDE SEQUENCE [LARGE SCALE GENOMIC DNA]</scope>
    <source>
        <strain>CFT073 / ATCC 700928 / UPEC</strain>
    </source>
</reference>
<accession>Q8FAT5</accession>
<name>SYK2_ECOL6</name>
<dbReference type="EC" id="6.1.1.6" evidence="2"/>
<dbReference type="EMBL" id="AE014075">
    <property type="protein sequence ID" value="AAN83560.1"/>
    <property type="status" value="ALT_INIT"/>
    <property type="molecule type" value="Genomic_DNA"/>
</dbReference>
<dbReference type="SMR" id="Q8FAT5"/>
<dbReference type="STRING" id="199310.c5138"/>
<dbReference type="KEGG" id="ecc:c5138"/>
<dbReference type="eggNOG" id="COG1190">
    <property type="taxonomic scope" value="Bacteria"/>
</dbReference>
<dbReference type="HOGENOM" id="CLU_008255_6_2_6"/>
<dbReference type="Proteomes" id="UP000001410">
    <property type="component" value="Chromosome"/>
</dbReference>
<dbReference type="GO" id="GO:0005829">
    <property type="term" value="C:cytosol"/>
    <property type="evidence" value="ECO:0007669"/>
    <property type="project" value="TreeGrafter"/>
</dbReference>
<dbReference type="GO" id="GO:0005524">
    <property type="term" value="F:ATP binding"/>
    <property type="evidence" value="ECO:0007669"/>
    <property type="project" value="UniProtKB-UniRule"/>
</dbReference>
<dbReference type="GO" id="GO:0004824">
    <property type="term" value="F:lysine-tRNA ligase activity"/>
    <property type="evidence" value="ECO:0007669"/>
    <property type="project" value="UniProtKB-UniRule"/>
</dbReference>
<dbReference type="GO" id="GO:0000287">
    <property type="term" value="F:magnesium ion binding"/>
    <property type="evidence" value="ECO:0007669"/>
    <property type="project" value="UniProtKB-UniRule"/>
</dbReference>
<dbReference type="GO" id="GO:0000049">
    <property type="term" value="F:tRNA binding"/>
    <property type="evidence" value="ECO:0007669"/>
    <property type="project" value="TreeGrafter"/>
</dbReference>
<dbReference type="GO" id="GO:0006430">
    <property type="term" value="P:lysyl-tRNA aminoacylation"/>
    <property type="evidence" value="ECO:0007669"/>
    <property type="project" value="UniProtKB-UniRule"/>
</dbReference>
<dbReference type="CDD" id="cd00775">
    <property type="entry name" value="LysRS_core"/>
    <property type="match status" value="1"/>
</dbReference>
<dbReference type="CDD" id="cd04322">
    <property type="entry name" value="LysRS_N"/>
    <property type="match status" value="1"/>
</dbReference>
<dbReference type="FunFam" id="2.40.50.140:FF:000024">
    <property type="entry name" value="Lysine--tRNA ligase"/>
    <property type="match status" value="1"/>
</dbReference>
<dbReference type="FunFam" id="3.30.930.10:FF:000001">
    <property type="entry name" value="Lysine--tRNA ligase"/>
    <property type="match status" value="1"/>
</dbReference>
<dbReference type="Gene3D" id="3.30.930.10">
    <property type="entry name" value="Bira Bifunctional Protein, Domain 2"/>
    <property type="match status" value="1"/>
</dbReference>
<dbReference type="Gene3D" id="2.40.50.140">
    <property type="entry name" value="Nucleic acid-binding proteins"/>
    <property type="match status" value="1"/>
</dbReference>
<dbReference type="HAMAP" id="MF_00252">
    <property type="entry name" value="Lys_tRNA_synth_class2"/>
    <property type="match status" value="1"/>
</dbReference>
<dbReference type="InterPro" id="IPR004364">
    <property type="entry name" value="Aa-tRNA-synt_II"/>
</dbReference>
<dbReference type="InterPro" id="IPR006195">
    <property type="entry name" value="aa-tRNA-synth_II"/>
</dbReference>
<dbReference type="InterPro" id="IPR045864">
    <property type="entry name" value="aa-tRNA-synth_II/BPL/LPL"/>
</dbReference>
<dbReference type="InterPro" id="IPR002313">
    <property type="entry name" value="Lys-tRNA-ligase_II"/>
</dbReference>
<dbReference type="InterPro" id="IPR034762">
    <property type="entry name" value="Lys-tRNA-ligase_II_bac/euk"/>
</dbReference>
<dbReference type="InterPro" id="IPR044136">
    <property type="entry name" value="Lys-tRNA-ligase_II_N"/>
</dbReference>
<dbReference type="InterPro" id="IPR018149">
    <property type="entry name" value="Lys-tRNA-synth_II_C"/>
</dbReference>
<dbReference type="InterPro" id="IPR012340">
    <property type="entry name" value="NA-bd_OB-fold"/>
</dbReference>
<dbReference type="InterPro" id="IPR004365">
    <property type="entry name" value="NA-bd_OB_tRNA"/>
</dbReference>
<dbReference type="NCBIfam" id="TIGR00499">
    <property type="entry name" value="lysS_bact"/>
    <property type="match status" value="1"/>
</dbReference>
<dbReference type="NCBIfam" id="NF001756">
    <property type="entry name" value="PRK00484.1"/>
    <property type="match status" value="1"/>
</dbReference>
<dbReference type="NCBIfam" id="NF009101">
    <property type="entry name" value="PRK12445.1"/>
    <property type="match status" value="1"/>
</dbReference>
<dbReference type="PANTHER" id="PTHR42918:SF15">
    <property type="entry name" value="LYSINE--TRNA LIGASE, CHLOROPLASTIC_MITOCHONDRIAL"/>
    <property type="match status" value="1"/>
</dbReference>
<dbReference type="PANTHER" id="PTHR42918">
    <property type="entry name" value="LYSYL-TRNA SYNTHETASE"/>
    <property type="match status" value="1"/>
</dbReference>
<dbReference type="Pfam" id="PF00152">
    <property type="entry name" value="tRNA-synt_2"/>
    <property type="match status" value="1"/>
</dbReference>
<dbReference type="Pfam" id="PF01336">
    <property type="entry name" value="tRNA_anti-codon"/>
    <property type="match status" value="1"/>
</dbReference>
<dbReference type="PIRSF" id="PIRSF039101">
    <property type="entry name" value="LysRS2"/>
    <property type="match status" value="1"/>
</dbReference>
<dbReference type="PRINTS" id="PR00982">
    <property type="entry name" value="TRNASYNTHLYS"/>
</dbReference>
<dbReference type="SUPFAM" id="SSF55681">
    <property type="entry name" value="Class II aaRS and biotin synthetases"/>
    <property type="match status" value="1"/>
</dbReference>
<dbReference type="SUPFAM" id="SSF50249">
    <property type="entry name" value="Nucleic acid-binding proteins"/>
    <property type="match status" value="1"/>
</dbReference>
<dbReference type="PROSITE" id="PS50862">
    <property type="entry name" value="AA_TRNA_LIGASE_II"/>
    <property type="match status" value="1"/>
</dbReference>
<comment type="catalytic activity">
    <reaction evidence="2">
        <text>tRNA(Lys) + L-lysine + ATP = L-lysyl-tRNA(Lys) + AMP + diphosphate</text>
        <dbReference type="Rhea" id="RHEA:20792"/>
        <dbReference type="Rhea" id="RHEA-COMP:9696"/>
        <dbReference type="Rhea" id="RHEA-COMP:9697"/>
        <dbReference type="ChEBI" id="CHEBI:30616"/>
        <dbReference type="ChEBI" id="CHEBI:32551"/>
        <dbReference type="ChEBI" id="CHEBI:33019"/>
        <dbReference type="ChEBI" id="CHEBI:78442"/>
        <dbReference type="ChEBI" id="CHEBI:78529"/>
        <dbReference type="ChEBI" id="CHEBI:456215"/>
        <dbReference type="EC" id="6.1.1.6"/>
    </reaction>
</comment>
<comment type="cofactor">
    <cofactor evidence="2">
        <name>Mg(2+)</name>
        <dbReference type="ChEBI" id="CHEBI:18420"/>
    </cofactor>
    <text evidence="2">Binds 3 Mg(2+) ions per subunit.</text>
</comment>
<comment type="subunit">
    <text evidence="2">Homodimer.</text>
</comment>
<comment type="subcellular location">
    <subcellularLocation>
        <location evidence="2">Cytoplasm</location>
    </subcellularLocation>
</comment>
<comment type="similarity">
    <text evidence="2">Belongs to the class-II aminoacyl-tRNA synthetase family.</text>
</comment>
<comment type="sequence caution" evidence="3">
    <conflict type="erroneous initiation">
        <sequence resource="EMBL-CDS" id="AAN83560"/>
    </conflict>
</comment>
<feature type="initiator methionine" description="Removed" evidence="1">
    <location>
        <position position="1"/>
    </location>
</feature>
<feature type="chain" id="PRO_0000152629" description="Lysine--tRNA ligase, heat inducible">
    <location>
        <begin position="2"/>
        <end position="505"/>
    </location>
</feature>
<feature type="binding site" evidence="2">
    <location>
        <position position="415"/>
    </location>
    <ligand>
        <name>Mg(2+)</name>
        <dbReference type="ChEBI" id="CHEBI:18420"/>
        <label>1</label>
    </ligand>
</feature>
<feature type="binding site" evidence="2">
    <location>
        <position position="422"/>
    </location>
    <ligand>
        <name>Mg(2+)</name>
        <dbReference type="ChEBI" id="CHEBI:18420"/>
        <label>1</label>
    </ligand>
</feature>
<feature type="binding site" evidence="2">
    <location>
        <position position="422"/>
    </location>
    <ligand>
        <name>Mg(2+)</name>
        <dbReference type="ChEBI" id="CHEBI:18420"/>
        <label>2</label>
    </ligand>
</feature>
<feature type="modified residue" description="N6-acetyllysine" evidence="2">
    <location>
        <position position="114"/>
    </location>
</feature>
<feature type="modified residue" description="N6-acetyllysine" evidence="2">
    <location>
        <position position="156"/>
    </location>
</feature>
<organism>
    <name type="scientific">Escherichia coli O6:H1 (strain CFT073 / ATCC 700928 / UPEC)</name>
    <dbReference type="NCBI Taxonomy" id="199310"/>
    <lineage>
        <taxon>Bacteria</taxon>
        <taxon>Pseudomonadati</taxon>
        <taxon>Pseudomonadota</taxon>
        <taxon>Gammaproteobacteria</taxon>
        <taxon>Enterobacterales</taxon>
        <taxon>Enterobacteriaceae</taxon>
        <taxon>Escherichia</taxon>
    </lineage>
</organism>
<sequence>MSERETRGANEAIDFNDELRNRREKLAALRQQGVAFPNDFRRDHTSDQLHEEFDAKDNQELESLNIEVSVAGRMMTRRIMGKASFVTLQDVGGRIQLYVARDSLPEGVYNDQFKKWDLGDIIGARGTLFKTQTGELSIHCTELRLLTKALRPLPDKFHGLQDQEVRYRQRYLDLIANDKSRQTFVVRSKILAAIRQFMVARGFMEVETPMMQVIPGGASARPFITHHNALDLDMYLRIAPELYLKRLVVGGFERVFEINRNFRNEGISVRHNPEFTMMELYMAYADYHDLIELTESLFRTLAQEVLGTTKVTYGEHVFDFGKPFEKLTMREAIKKYRPETDMADLDNFDAAKALAESIGITVEKSWGLGRIVTEIFDEVAEAHLIQPTFITEYPAEVSPLARRNDVNPEITDRFEFFIGGREIGNGFSELNDAEDQAERFQEQVNAKAAGDDEAMFYDEDYVTALEYGLPPTAGLGIGIDRMIMLFTNSHTIRDVILFPAMRPQK</sequence>
<evidence type="ECO:0000250" key="1"/>
<evidence type="ECO:0000255" key="2">
    <source>
        <dbReference type="HAMAP-Rule" id="MF_00252"/>
    </source>
</evidence>
<evidence type="ECO:0000305" key="3"/>
<protein>
    <recommendedName>
        <fullName evidence="2">Lysine--tRNA ligase, heat inducible</fullName>
        <ecNumber evidence="2">6.1.1.6</ecNumber>
    </recommendedName>
    <alternativeName>
        <fullName evidence="2">Lysyl-tRNA synthetase</fullName>
        <shortName evidence="2">LysRS</shortName>
    </alternativeName>
</protein>